<dbReference type="EMBL" id="EF380352">
    <property type="protein sequence ID" value="ABQ43258.1"/>
    <property type="molecule type" value="Genomic_DNA"/>
</dbReference>
<dbReference type="RefSeq" id="YP_001294096.1">
    <property type="nucleotide sequence ID" value="NC_009598.1"/>
</dbReference>
<dbReference type="SMR" id="A6MMC0"/>
<dbReference type="GeneID" id="5236462"/>
<dbReference type="GO" id="GO:0009507">
    <property type="term" value="C:chloroplast"/>
    <property type="evidence" value="ECO:0007669"/>
    <property type="project" value="UniProtKB-SubCell"/>
</dbReference>
<dbReference type="GO" id="GO:0015935">
    <property type="term" value="C:small ribosomal subunit"/>
    <property type="evidence" value="ECO:0007669"/>
    <property type="project" value="TreeGrafter"/>
</dbReference>
<dbReference type="GO" id="GO:0019843">
    <property type="term" value="F:rRNA binding"/>
    <property type="evidence" value="ECO:0007669"/>
    <property type="project" value="UniProtKB-UniRule"/>
</dbReference>
<dbReference type="GO" id="GO:0003735">
    <property type="term" value="F:structural constituent of ribosome"/>
    <property type="evidence" value="ECO:0007669"/>
    <property type="project" value="InterPro"/>
</dbReference>
<dbReference type="GO" id="GO:0006412">
    <property type="term" value="P:translation"/>
    <property type="evidence" value="ECO:0007669"/>
    <property type="project" value="UniProtKB-UniRule"/>
</dbReference>
<dbReference type="FunFam" id="1.10.287.1480:FF:000001">
    <property type="entry name" value="30S ribosomal protein S14"/>
    <property type="match status" value="1"/>
</dbReference>
<dbReference type="Gene3D" id="1.10.287.1480">
    <property type="match status" value="1"/>
</dbReference>
<dbReference type="HAMAP" id="MF_00537">
    <property type="entry name" value="Ribosomal_uS14_1"/>
    <property type="match status" value="1"/>
</dbReference>
<dbReference type="InterPro" id="IPR001209">
    <property type="entry name" value="Ribosomal_uS14"/>
</dbReference>
<dbReference type="InterPro" id="IPR023036">
    <property type="entry name" value="Ribosomal_uS14_bac/plastid"/>
</dbReference>
<dbReference type="InterPro" id="IPR018271">
    <property type="entry name" value="Ribosomal_uS14_CS"/>
</dbReference>
<dbReference type="NCBIfam" id="NF006477">
    <property type="entry name" value="PRK08881.1"/>
    <property type="match status" value="1"/>
</dbReference>
<dbReference type="PANTHER" id="PTHR19836">
    <property type="entry name" value="30S RIBOSOMAL PROTEIN S14"/>
    <property type="match status" value="1"/>
</dbReference>
<dbReference type="PANTHER" id="PTHR19836:SF19">
    <property type="entry name" value="SMALL RIBOSOMAL SUBUNIT PROTEIN US14M"/>
    <property type="match status" value="1"/>
</dbReference>
<dbReference type="Pfam" id="PF00253">
    <property type="entry name" value="Ribosomal_S14"/>
    <property type="match status" value="1"/>
</dbReference>
<dbReference type="SUPFAM" id="SSF57716">
    <property type="entry name" value="Glucocorticoid receptor-like (DNA-binding domain)"/>
    <property type="match status" value="1"/>
</dbReference>
<dbReference type="PROSITE" id="PS00527">
    <property type="entry name" value="RIBOSOMAL_S14"/>
    <property type="match status" value="1"/>
</dbReference>
<feature type="chain" id="PRO_0000354406" description="Small ribosomal subunit protein uS14c">
    <location>
        <begin position="1"/>
        <end position="100"/>
    </location>
</feature>
<comment type="function">
    <text evidence="1">Binds 16S rRNA, required for the assembly of 30S particles.</text>
</comment>
<comment type="subunit">
    <text evidence="1">Part of the 30S ribosomal subunit.</text>
</comment>
<comment type="subcellular location">
    <subcellularLocation>
        <location>Plastid</location>
        <location>Chloroplast</location>
    </subcellularLocation>
</comment>
<comment type="similarity">
    <text evidence="1">Belongs to the universal ribosomal protein uS14 family.</text>
</comment>
<geneLocation type="chloroplast"/>
<gene>
    <name evidence="1" type="primary">rps14</name>
</gene>
<proteinExistence type="inferred from homology"/>
<keyword id="KW-0150">Chloroplast</keyword>
<keyword id="KW-0934">Plastid</keyword>
<keyword id="KW-0687">Ribonucleoprotein</keyword>
<keyword id="KW-0689">Ribosomal protein</keyword>
<keyword id="KW-0694">RNA-binding</keyword>
<keyword id="KW-0699">rRNA-binding</keyword>
<sequence>MARKSLIQRERKRKKLEQKYHWIRRSSKTEINKVPSLSDKWEIHGKLQSPPRNSAPIRLHRRCFSTGRPRANYRDFGLSGHILREMVHACLLPGATRSSW</sequence>
<name>RR14_CHLSC</name>
<evidence type="ECO:0000255" key="1">
    <source>
        <dbReference type="HAMAP-Rule" id="MF_00537"/>
    </source>
</evidence>
<evidence type="ECO:0000305" key="2"/>
<organism>
    <name type="scientific">Chloranthus spicatus</name>
    <name type="common">Chulantree</name>
    <name type="synonym">Nigrina spicata</name>
    <dbReference type="NCBI Taxonomy" id="13006"/>
    <lineage>
        <taxon>Eukaryota</taxon>
        <taxon>Viridiplantae</taxon>
        <taxon>Streptophyta</taxon>
        <taxon>Embryophyta</taxon>
        <taxon>Tracheophyta</taxon>
        <taxon>Spermatophyta</taxon>
        <taxon>Magnoliopsida</taxon>
        <taxon>Chloranthales</taxon>
        <taxon>Chloranthaceae</taxon>
        <taxon>Chloranthus</taxon>
    </lineage>
</organism>
<accession>A6MMC0</accession>
<protein>
    <recommendedName>
        <fullName evidence="1">Small ribosomal subunit protein uS14c</fullName>
    </recommendedName>
    <alternativeName>
        <fullName evidence="2">30S ribosomal protein S14, chloroplastic</fullName>
    </alternativeName>
</protein>
<reference key="1">
    <citation type="journal article" date="2007" name="Mol. Phylogenet. Evol.">
        <title>Phylogenetic and evolutionary implications of complete chloroplast genome sequences of four early-diverging angiosperms: Buxus (Buxaceae), Chloranthus (Chloranthaceae), Dioscorea (Dioscoreaceae), and Illicium (Schisandraceae).</title>
        <authorList>
            <person name="Hansen D.R."/>
            <person name="Dastidar S.G."/>
            <person name="Cai Z."/>
            <person name="Penaflor C."/>
            <person name="Kuehl J.V."/>
            <person name="Boore J.L."/>
            <person name="Jansen R.K."/>
        </authorList>
    </citation>
    <scope>NUCLEOTIDE SEQUENCE [LARGE SCALE GENOMIC DNA]</scope>
</reference>